<keyword id="KW-0240">DNA-directed RNA polymerase</keyword>
<keyword id="KW-0548">Nucleotidyltransferase</keyword>
<keyword id="KW-1185">Reference proteome</keyword>
<keyword id="KW-0804">Transcription</keyword>
<keyword id="KW-0808">Transferase</keyword>
<evidence type="ECO:0000255" key="1">
    <source>
        <dbReference type="HAMAP-Rule" id="MF_00366"/>
    </source>
</evidence>
<evidence type="ECO:0000305" key="2"/>
<organism>
    <name type="scientific">Streptococcus agalactiae serotype V (strain ATCC BAA-611 / 2603 V/R)</name>
    <dbReference type="NCBI Taxonomy" id="208435"/>
    <lineage>
        <taxon>Bacteria</taxon>
        <taxon>Bacillati</taxon>
        <taxon>Bacillota</taxon>
        <taxon>Bacilli</taxon>
        <taxon>Lactobacillales</taxon>
        <taxon>Streptococcaceae</taxon>
        <taxon>Streptococcus</taxon>
    </lineage>
</organism>
<feature type="chain" id="PRO_0000128988" description="DNA-directed RNA polymerase subunit omega">
    <location>
        <begin position="1"/>
        <end position="103"/>
    </location>
</feature>
<accession>P66729</accession>
<accession>Q8E1P0</accession>
<accession>Q8E755</accession>
<gene>
    <name evidence="1" type="primary">rpoZ</name>
    <name type="ordered locus">SAG0314</name>
</gene>
<comment type="function">
    <text evidence="1">Promotes RNA polymerase assembly. Latches the N- and C-terminal regions of the beta' subunit thereby facilitating its interaction with the beta and alpha subunits.</text>
</comment>
<comment type="catalytic activity">
    <reaction evidence="1">
        <text>RNA(n) + a ribonucleoside 5'-triphosphate = RNA(n+1) + diphosphate</text>
        <dbReference type="Rhea" id="RHEA:21248"/>
        <dbReference type="Rhea" id="RHEA-COMP:14527"/>
        <dbReference type="Rhea" id="RHEA-COMP:17342"/>
        <dbReference type="ChEBI" id="CHEBI:33019"/>
        <dbReference type="ChEBI" id="CHEBI:61557"/>
        <dbReference type="ChEBI" id="CHEBI:140395"/>
        <dbReference type="EC" id="2.7.7.6"/>
    </reaction>
</comment>
<comment type="subunit">
    <text evidence="1">The RNAP catalytic core consists of 2 alpha, 1 beta, 1 beta' and 1 omega subunit. When a sigma factor is associated with the core the holoenzyme is formed, which can initiate transcription.</text>
</comment>
<comment type="similarity">
    <text evidence="1">Belongs to the RNA polymerase subunit omega family.</text>
</comment>
<comment type="sequence caution" evidence="2">
    <conflict type="erroneous initiation">
        <sequence resource="EMBL-CDS" id="AAM99220"/>
    </conflict>
</comment>
<protein>
    <recommendedName>
        <fullName evidence="1">DNA-directed RNA polymerase subunit omega</fullName>
        <shortName evidence="1">RNAP omega subunit</shortName>
        <ecNumber evidence="1">2.7.7.6</ecNumber>
    </recommendedName>
    <alternativeName>
        <fullName evidence="1">RNA polymerase omega subunit</fullName>
    </alternativeName>
    <alternativeName>
        <fullName evidence="1">Transcriptase subunit omega</fullName>
    </alternativeName>
</protein>
<proteinExistence type="inferred from homology"/>
<name>RPOZ_STRA5</name>
<sequence>MLKPSIDTLLDKVPSKYSLVILQAKRAHELEAGEKATQDFKSVKSTLRALEEIESGNVVIHPDPSAKRASVRARIEAERLAKEEEERKIKEQIAKEKEDGEKI</sequence>
<dbReference type="EC" id="2.7.7.6" evidence="1"/>
<dbReference type="EMBL" id="AE009948">
    <property type="protein sequence ID" value="AAM99220.1"/>
    <property type="status" value="ALT_INIT"/>
    <property type="molecule type" value="Genomic_DNA"/>
</dbReference>
<dbReference type="RefSeq" id="NP_687348.1">
    <property type="nucleotide sequence ID" value="NC_004116.1"/>
</dbReference>
<dbReference type="SMR" id="P66729"/>
<dbReference type="STRING" id="208435.SAG0314"/>
<dbReference type="KEGG" id="sag:SAG0314"/>
<dbReference type="PATRIC" id="fig|208435.3.peg.310"/>
<dbReference type="HOGENOM" id="CLU_125406_0_0_9"/>
<dbReference type="OrthoDB" id="9815459at2"/>
<dbReference type="Proteomes" id="UP000000821">
    <property type="component" value="Chromosome"/>
</dbReference>
<dbReference type="GO" id="GO:0000428">
    <property type="term" value="C:DNA-directed RNA polymerase complex"/>
    <property type="evidence" value="ECO:0007669"/>
    <property type="project" value="UniProtKB-KW"/>
</dbReference>
<dbReference type="GO" id="GO:0003677">
    <property type="term" value="F:DNA binding"/>
    <property type="evidence" value="ECO:0007669"/>
    <property type="project" value="UniProtKB-UniRule"/>
</dbReference>
<dbReference type="GO" id="GO:0003899">
    <property type="term" value="F:DNA-directed RNA polymerase activity"/>
    <property type="evidence" value="ECO:0007669"/>
    <property type="project" value="UniProtKB-UniRule"/>
</dbReference>
<dbReference type="GO" id="GO:0006351">
    <property type="term" value="P:DNA-templated transcription"/>
    <property type="evidence" value="ECO:0007669"/>
    <property type="project" value="UniProtKB-UniRule"/>
</dbReference>
<dbReference type="Gene3D" id="3.90.940.10">
    <property type="match status" value="1"/>
</dbReference>
<dbReference type="HAMAP" id="MF_00366">
    <property type="entry name" value="RNApol_bact_RpoZ"/>
    <property type="match status" value="1"/>
</dbReference>
<dbReference type="InterPro" id="IPR003716">
    <property type="entry name" value="DNA-dir_RNA_pol_omega"/>
</dbReference>
<dbReference type="InterPro" id="IPR006110">
    <property type="entry name" value="Pol_omega/Rpo6/RPB6"/>
</dbReference>
<dbReference type="InterPro" id="IPR036161">
    <property type="entry name" value="RPB6/omega-like_sf"/>
</dbReference>
<dbReference type="NCBIfam" id="TIGR00690">
    <property type="entry name" value="rpoZ"/>
    <property type="match status" value="1"/>
</dbReference>
<dbReference type="PANTHER" id="PTHR34476">
    <property type="entry name" value="DNA-DIRECTED RNA POLYMERASE SUBUNIT OMEGA"/>
    <property type="match status" value="1"/>
</dbReference>
<dbReference type="PANTHER" id="PTHR34476:SF1">
    <property type="entry name" value="DNA-DIRECTED RNA POLYMERASE SUBUNIT OMEGA"/>
    <property type="match status" value="1"/>
</dbReference>
<dbReference type="Pfam" id="PF01192">
    <property type="entry name" value="RNA_pol_Rpb6"/>
    <property type="match status" value="1"/>
</dbReference>
<dbReference type="SMART" id="SM01409">
    <property type="entry name" value="RNA_pol_Rpb6"/>
    <property type="match status" value="1"/>
</dbReference>
<dbReference type="SUPFAM" id="SSF63562">
    <property type="entry name" value="RPB6/omega subunit-like"/>
    <property type="match status" value="1"/>
</dbReference>
<reference key="1">
    <citation type="journal article" date="2002" name="Proc. Natl. Acad. Sci. U.S.A.">
        <title>Complete genome sequence and comparative genomic analysis of an emerging human pathogen, serotype V Streptococcus agalactiae.</title>
        <authorList>
            <person name="Tettelin H."/>
            <person name="Masignani V."/>
            <person name="Cieslewicz M.J."/>
            <person name="Eisen J.A."/>
            <person name="Peterson S.N."/>
            <person name="Wessels M.R."/>
            <person name="Paulsen I.T."/>
            <person name="Nelson K.E."/>
            <person name="Margarit I."/>
            <person name="Read T.D."/>
            <person name="Madoff L.C."/>
            <person name="Wolf A.M."/>
            <person name="Beanan M.J."/>
            <person name="Brinkac L.M."/>
            <person name="Daugherty S.C."/>
            <person name="DeBoy R.T."/>
            <person name="Durkin A.S."/>
            <person name="Kolonay J.F."/>
            <person name="Madupu R."/>
            <person name="Lewis M.R."/>
            <person name="Radune D."/>
            <person name="Fedorova N.B."/>
            <person name="Scanlan D."/>
            <person name="Khouri H.M."/>
            <person name="Mulligan S."/>
            <person name="Carty H.A."/>
            <person name="Cline R.T."/>
            <person name="Van Aken S.E."/>
            <person name="Gill J."/>
            <person name="Scarselli M."/>
            <person name="Mora M."/>
            <person name="Iacobini E.T."/>
            <person name="Brettoni C."/>
            <person name="Galli G."/>
            <person name="Mariani M."/>
            <person name="Vegni F."/>
            <person name="Maione D."/>
            <person name="Rinaudo D."/>
            <person name="Rappuoli R."/>
            <person name="Telford J.L."/>
            <person name="Kasper D.L."/>
            <person name="Grandi G."/>
            <person name="Fraser C.M."/>
        </authorList>
    </citation>
    <scope>NUCLEOTIDE SEQUENCE [LARGE SCALE GENOMIC DNA]</scope>
    <source>
        <strain>ATCC BAA-611 / 2603 V/R</strain>
    </source>
</reference>